<keyword id="KW-0028">Amino-acid biosynthesis</keyword>
<keyword id="KW-0032">Aminotransferase</keyword>
<keyword id="KW-0963">Cytoplasm</keyword>
<keyword id="KW-0663">Pyridoxal phosphate</keyword>
<keyword id="KW-0664">Pyridoxine biosynthesis</keyword>
<keyword id="KW-0718">Serine biosynthesis</keyword>
<keyword id="KW-0808">Transferase</keyword>
<comment type="function">
    <text evidence="1">Catalyzes the reversible conversion of 3-phosphohydroxypyruvate to phosphoserine and of 3-hydroxy-2-oxo-4-phosphonooxybutanoate to phosphohydroxythreonine.</text>
</comment>
<comment type="catalytic activity">
    <reaction evidence="1">
        <text>O-phospho-L-serine + 2-oxoglutarate = 3-phosphooxypyruvate + L-glutamate</text>
        <dbReference type="Rhea" id="RHEA:14329"/>
        <dbReference type="ChEBI" id="CHEBI:16810"/>
        <dbReference type="ChEBI" id="CHEBI:18110"/>
        <dbReference type="ChEBI" id="CHEBI:29985"/>
        <dbReference type="ChEBI" id="CHEBI:57524"/>
        <dbReference type="EC" id="2.6.1.52"/>
    </reaction>
</comment>
<comment type="catalytic activity">
    <reaction evidence="1">
        <text>4-(phosphooxy)-L-threonine + 2-oxoglutarate = (R)-3-hydroxy-2-oxo-4-phosphooxybutanoate + L-glutamate</text>
        <dbReference type="Rhea" id="RHEA:16573"/>
        <dbReference type="ChEBI" id="CHEBI:16810"/>
        <dbReference type="ChEBI" id="CHEBI:29985"/>
        <dbReference type="ChEBI" id="CHEBI:58452"/>
        <dbReference type="ChEBI" id="CHEBI:58538"/>
        <dbReference type="EC" id="2.6.1.52"/>
    </reaction>
</comment>
<comment type="cofactor">
    <cofactor evidence="1">
        <name>pyridoxal 5'-phosphate</name>
        <dbReference type="ChEBI" id="CHEBI:597326"/>
    </cofactor>
    <text evidence="1">Binds 1 pyridoxal phosphate per subunit.</text>
</comment>
<comment type="pathway">
    <text evidence="1">Amino-acid biosynthesis; L-serine biosynthesis; L-serine from 3-phospho-D-glycerate: step 2/3.</text>
</comment>
<comment type="pathway">
    <text evidence="1">Cofactor biosynthesis; pyridoxine 5'-phosphate biosynthesis; pyridoxine 5'-phosphate from D-erythrose 4-phosphate: step 3/5.</text>
</comment>
<comment type="subunit">
    <text evidence="1">Homodimer.</text>
</comment>
<comment type="subcellular location">
    <subcellularLocation>
        <location evidence="1">Cytoplasm</location>
    </subcellularLocation>
</comment>
<comment type="similarity">
    <text evidence="1">Belongs to the class-V pyridoxal-phosphate-dependent aminotransferase family. SerC subfamily.</text>
</comment>
<reference key="1">
    <citation type="journal article" date="2008" name="J. Biotechnol.">
        <title>The genome of Xanthomonas campestris pv. campestris B100 and its use for the reconstruction of metabolic pathways involved in xanthan biosynthesis.</title>
        <authorList>
            <person name="Vorhoelter F.-J."/>
            <person name="Schneiker S."/>
            <person name="Goesmann A."/>
            <person name="Krause L."/>
            <person name="Bekel T."/>
            <person name="Kaiser O."/>
            <person name="Linke B."/>
            <person name="Patschkowski T."/>
            <person name="Rueckert C."/>
            <person name="Schmid J."/>
            <person name="Sidhu V.K."/>
            <person name="Sieber V."/>
            <person name="Tauch A."/>
            <person name="Watt S.A."/>
            <person name="Weisshaar B."/>
            <person name="Becker A."/>
            <person name="Niehaus K."/>
            <person name="Puehler A."/>
        </authorList>
    </citation>
    <scope>NUCLEOTIDE SEQUENCE [LARGE SCALE GENOMIC DNA]</scope>
    <source>
        <strain>B100</strain>
    </source>
</reference>
<feature type="chain" id="PRO_1000097223" description="Phosphoserine aminotransferase">
    <location>
        <begin position="1"/>
        <end position="361"/>
    </location>
</feature>
<feature type="binding site" evidence="1">
    <location>
        <position position="42"/>
    </location>
    <ligand>
        <name>L-glutamate</name>
        <dbReference type="ChEBI" id="CHEBI:29985"/>
    </ligand>
</feature>
<feature type="binding site" evidence="1">
    <location>
        <begin position="76"/>
        <end position="77"/>
    </location>
    <ligand>
        <name>pyridoxal 5'-phosphate</name>
        <dbReference type="ChEBI" id="CHEBI:597326"/>
    </ligand>
</feature>
<feature type="binding site" evidence="1">
    <location>
        <position position="102"/>
    </location>
    <ligand>
        <name>pyridoxal 5'-phosphate</name>
        <dbReference type="ChEBI" id="CHEBI:597326"/>
    </ligand>
</feature>
<feature type="binding site" evidence="1">
    <location>
        <position position="152"/>
    </location>
    <ligand>
        <name>pyridoxal 5'-phosphate</name>
        <dbReference type="ChEBI" id="CHEBI:597326"/>
    </ligand>
</feature>
<feature type="binding site" evidence="1">
    <location>
        <position position="172"/>
    </location>
    <ligand>
        <name>pyridoxal 5'-phosphate</name>
        <dbReference type="ChEBI" id="CHEBI:597326"/>
    </ligand>
</feature>
<feature type="binding site" evidence="1">
    <location>
        <position position="195"/>
    </location>
    <ligand>
        <name>pyridoxal 5'-phosphate</name>
        <dbReference type="ChEBI" id="CHEBI:597326"/>
    </ligand>
</feature>
<feature type="binding site" evidence="1">
    <location>
        <begin position="237"/>
        <end position="238"/>
    </location>
    <ligand>
        <name>pyridoxal 5'-phosphate</name>
        <dbReference type="ChEBI" id="CHEBI:597326"/>
    </ligand>
</feature>
<feature type="modified residue" description="N6-(pyridoxal phosphate)lysine" evidence="1">
    <location>
        <position position="196"/>
    </location>
</feature>
<name>SERC_XANCB</name>
<evidence type="ECO:0000255" key="1">
    <source>
        <dbReference type="HAMAP-Rule" id="MF_00160"/>
    </source>
</evidence>
<accession>B0RUW3</accession>
<gene>
    <name evidence="1" type="primary">serC</name>
    <name type="ordered locus">xcc-b100_2671</name>
</gene>
<proteinExistence type="inferred from homology"/>
<dbReference type="EC" id="2.6.1.52" evidence="1"/>
<dbReference type="EMBL" id="AM920689">
    <property type="protein sequence ID" value="CAP52032.1"/>
    <property type="molecule type" value="Genomic_DNA"/>
</dbReference>
<dbReference type="SMR" id="B0RUW3"/>
<dbReference type="KEGG" id="xca:xcc-b100_2671"/>
<dbReference type="HOGENOM" id="CLU_034866_0_2_6"/>
<dbReference type="UniPathway" id="UPA00135">
    <property type="reaction ID" value="UER00197"/>
</dbReference>
<dbReference type="UniPathway" id="UPA00244">
    <property type="reaction ID" value="UER00311"/>
</dbReference>
<dbReference type="Proteomes" id="UP000001188">
    <property type="component" value="Chromosome"/>
</dbReference>
<dbReference type="GO" id="GO:0005737">
    <property type="term" value="C:cytoplasm"/>
    <property type="evidence" value="ECO:0007669"/>
    <property type="project" value="UniProtKB-SubCell"/>
</dbReference>
<dbReference type="GO" id="GO:0004648">
    <property type="term" value="F:O-phospho-L-serine:2-oxoglutarate aminotransferase activity"/>
    <property type="evidence" value="ECO:0007669"/>
    <property type="project" value="UniProtKB-UniRule"/>
</dbReference>
<dbReference type="GO" id="GO:0030170">
    <property type="term" value="F:pyridoxal phosphate binding"/>
    <property type="evidence" value="ECO:0007669"/>
    <property type="project" value="UniProtKB-UniRule"/>
</dbReference>
<dbReference type="GO" id="GO:0006564">
    <property type="term" value="P:L-serine biosynthetic process"/>
    <property type="evidence" value="ECO:0007669"/>
    <property type="project" value="UniProtKB-UniRule"/>
</dbReference>
<dbReference type="GO" id="GO:0008615">
    <property type="term" value="P:pyridoxine biosynthetic process"/>
    <property type="evidence" value="ECO:0007669"/>
    <property type="project" value="UniProtKB-UniRule"/>
</dbReference>
<dbReference type="FunFam" id="3.40.640.10:FF:000010">
    <property type="entry name" value="Phosphoserine aminotransferase"/>
    <property type="match status" value="1"/>
</dbReference>
<dbReference type="FunFam" id="3.90.1150.10:FF:000006">
    <property type="entry name" value="Phosphoserine aminotransferase"/>
    <property type="match status" value="1"/>
</dbReference>
<dbReference type="Gene3D" id="3.90.1150.10">
    <property type="entry name" value="Aspartate Aminotransferase, domain 1"/>
    <property type="match status" value="1"/>
</dbReference>
<dbReference type="Gene3D" id="3.40.640.10">
    <property type="entry name" value="Type I PLP-dependent aspartate aminotransferase-like (Major domain)"/>
    <property type="match status" value="1"/>
</dbReference>
<dbReference type="HAMAP" id="MF_00160">
    <property type="entry name" value="SerC_aminotrans_5"/>
    <property type="match status" value="1"/>
</dbReference>
<dbReference type="InterPro" id="IPR000192">
    <property type="entry name" value="Aminotrans_V_dom"/>
</dbReference>
<dbReference type="InterPro" id="IPR020578">
    <property type="entry name" value="Aminotrans_V_PyrdxlP_BS"/>
</dbReference>
<dbReference type="InterPro" id="IPR022278">
    <property type="entry name" value="Pser_aminoTfrase"/>
</dbReference>
<dbReference type="InterPro" id="IPR015424">
    <property type="entry name" value="PyrdxlP-dep_Trfase"/>
</dbReference>
<dbReference type="InterPro" id="IPR015421">
    <property type="entry name" value="PyrdxlP-dep_Trfase_major"/>
</dbReference>
<dbReference type="InterPro" id="IPR015422">
    <property type="entry name" value="PyrdxlP-dep_Trfase_small"/>
</dbReference>
<dbReference type="NCBIfam" id="NF003764">
    <property type="entry name" value="PRK05355.1"/>
    <property type="match status" value="1"/>
</dbReference>
<dbReference type="NCBIfam" id="TIGR01364">
    <property type="entry name" value="serC_1"/>
    <property type="match status" value="1"/>
</dbReference>
<dbReference type="PANTHER" id="PTHR43247">
    <property type="entry name" value="PHOSPHOSERINE AMINOTRANSFERASE"/>
    <property type="match status" value="1"/>
</dbReference>
<dbReference type="PANTHER" id="PTHR43247:SF1">
    <property type="entry name" value="PHOSPHOSERINE AMINOTRANSFERASE"/>
    <property type="match status" value="1"/>
</dbReference>
<dbReference type="Pfam" id="PF00266">
    <property type="entry name" value="Aminotran_5"/>
    <property type="match status" value="1"/>
</dbReference>
<dbReference type="PIRSF" id="PIRSF000525">
    <property type="entry name" value="SerC"/>
    <property type="match status" value="1"/>
</dbReference>
<dbReference type="SUPFAM" id="SSF53383">
    <property type="entry name" value="PLP-dependent transferases"/>
    <property type="match status" value="1"/>
</dbReference>
<dbReference type="PROSITE" id="PS00595">
    <property type="entry name" value="AA_TRANSFER_CLASS_5"/>
    <property type="match status" value="1"/>
</dbReference>
<protein>
    <recommendedName>
        <fullName evidence="1">Phosphoserine aminotransferase</fullName>
        <ecNumber evidence="1">2.6.1.52</ecNumber>
    </recommendedName>
    <alternativeName>
        <fullName evidence="1">Phosphohydroxythreonine aminotransferase</fullName>
        <shortName evidence="1">PSAT</shortName>
    </alternativeName>
</protein>
<sequence length="361" mass="38706">MTRAFNFSAGPATLPESVLRQAQEEMVEWNGVGASIVEISHRSADFMAVAAAAEADLRTLLSIPDDYAVLFTSGGATTIQALLPLNFAAPGQAVDYVVSGHWGKTAIKQATPYVDVRVAADGQPGGYVDIPPVASWTLSPHAAYVHITANETIHGVEFRDTPDVGTLPLFADFSSSIASEPLDIRRYGLIYAGAQKNLGPVGISVVIVRRELLERAGQPRADIFNYASHVARDSMLNTPPTWNWYLLGLTVKWMLEQGGVAAFAQCNAEKAALVYGAIDGSGGFYRNQVMPTVRSRMNIPFFLGDEQLDALFVSESKAAGLLALKGHKAVGGIRASLYNAMPVAGAQALVAFMHDFQQRHG</sequence>
<organism>
    <name type="scientific">Xanthomonas campestris pv. campestris (strain B100)</name>
    <dbReference type="NCBI Taxonomy" id="509169"/>
    <lineage>
        <taxon>Bacteria</taxon>
        <taxon>Pseudomonadati</taxon>
        <taxon>Pseudomonadota</taxon>
        <taxon>Gammaproteobacteria</taxon>
        <taxon>Lysobacterales</taxon>
        <taxon>Lysobacteraceae</taxon>
        <taxon>Xanthomonas</taxon>
    </lineage>
</organism>